<protein>
    <recommendedName>
        <fullName>Guanine nucleotide-binding protein G(s) subunit alpha isoforms XLas</fullName>
        <ecNumber evidence="9">3.6.5.-</ecNumber>
    </recommendedName>
    <alternativeName>
        <fullName>Adenylate cyclase-stimulating G alpha protein</fullName>
    </alternativeName>
    <alternativeName>
        <fullName>Extra large alphas protein</fullName>
        <shortName>XLalphas</shortName>
    </alternativeName>
</protein>
<gene>
    <name evidence="20" type="primary">Gnas</name>
    <name evidence="20" type="synonym">Gnas1</name>
</gene>
<evidence type="ECO:0000250" key="1"/>
<evidence type="ECO:0000250" key="2">
    <source>
        <dbReference type="UniProtKB" id="P04896"/>
    </source>
</evidence>
<evidence type="ECO:0000250" key="3">
    <source>
        <dbReference type="UniProtKB" id="P63096"/>
    </source>
</evidence>
<evidence type="ECO:0000250" key="4">
    <source>
        <dbReference type="UniProtKB" id="Q5JWF2"/>
    </source>
</evidence>
<evidence type="ECO:0000250" key="5">
    <source>
        <dbReference type="UniProtKB" id="Q63803"/>
    </source>
</evidence>
<evidence type="ECO:0000255" key="6"/>
<evidence type="ECO:0000255" key="7">
    <source>
        <dbReference type="PROSITE-ProRule" id="PRU01230"/>
    </source>
</evidence>
<evidence type="ECO:0000256" key="8">
    <source>
        <dbReference type="SAM" id="MobiDB-lite"/>
    </source>
</evidence>
<evidence type="ECO:0000269" key="9">
    <source>
    </source>
</evidence>
<evidence type="ECO:0000269" key="10">
    <source>
    </source>
</evidence>
<evidence type="ECO:0000303" key="11">
    <source>
    </source>
</evidence>
<evidence type="ECO:0000303" key="12">
    <source>
    </source>
</evidence>
<evidence type="ECO:0000305" key="13"/>
<evidence type="ECO:0000312" key="14">
    <source>
        <dbReference type="EMBL" id="AAD14686.1"/>
    </source>
</evidence>
<evidence type="ECO:0000312" key="15">
    <source>
        <dbReference type="EMBL" id="AAR99381.1"/>
    </source>
</evidence>
<evidence type="ECO:0000312" key="16">
    <source>
        <dbReference type="EMBL" id="AAR99382.1"/>
    </source>
</evidence>
<evidence type="ECO:0000312" key="17">
    <source>
        <dbReference type="EMBL" id="AAR99383.1"/>
    </source>
</evidence>
<evidence type="ECO:0000312" key="18">
    <source>
        <dbReference type="EMBL" id="AAS00601.1"/>
    </source>
</evidence>
<evidence type="ECO:0000312" key="19">
    <source>
        <dbReference type="EMBL" id="CAB83219.1"/>
    </source>
</evidence>
<evidence type="ECO:0000312" key="20">
    <source>
        <dbReference type="MGI" id="MGI:95777"/>
    </source>
</evidence>
<organism>
    <name type="scientific">Mus musculus</name>
    <name type="common">Mouse</name>
    <dbReference type="NCBI Taxonomy" id="10090"/>
    <lineage>
        <taxon>Eukaryota</taxon>
        <taxon>Metazoa</taxon>
        <taxon>Chordata</taxon>
        <taxon>Craniata</taxon>
        <taxon>Vertebrata</taxon>
        <taxon>Euteleostomi</taxon>
        <taxon>Mammalia</taxon>
        <taxon>Eutheria</taxon>
        <taxon>Euarchontoglires</taxon>
        <taxon>Glires</taxon>
        <taxon>Rodentia</taxon>
        <taxon>Myomorpha</taxon>
        <taxon>Muroidea</taxon>
        <taxon>Muridae</taxon>
        <taxon>Murinae</taxon>
        <taxon>Mus</taxon>
        <taxon>Mus</taxon>
    </lineage>
</organism>
<comment type="function">
    <text evidence="9">Guanine nucleotide-binding proteins (G proteins) function as transducers in numerous signaling pathways controlled by G protein-coupled receptors (GPCRs) (PubMed:12145344). The alpha chain contains the guanine nucleotide binding site and alternates between an active, GTP-bound state and an inactive, GDP-bound state (PubMed:12145344). Signaling by an activated GPCR promotes GDP release and GTP binding (PubMed:12145344). The alpha subunit has a low GTPase activity that converts bound GTP to GDP, thereby terminating the signal (PubMed:12145344). Both GDP release and GTP hydrolysis are modulated by numerous regulatory proteins (PubMed:12145344). Signaling involves the activation of adenylyl cyclases, resulting in increased levels of the signaling molecule cAMP (PubMed:12145344). GNAS functions downstream of several GPCRs, including beta-adrenergic receptors (PubMed:12145344). XLas isoforms interact with the same set of receptors as Gnas isoforms (PubMed:12145344).</text>
</comment>
<comment type="catalytic activity">
    <reaction evidence="9">
        <text>GTP + H2O = GDP + phosphate + H(+)</text>
        <dbReference type="Rhea" id="RHEA:19669"/>
        <dbReference type="ChEBI" id="CHEBI:15377"/>
        <dbReference type="ChEBI" id="CHEBI:15378"/>
        <dbReference type="ChEBI" id="CHEBI:37565"/>
        <dbReference type="ChEBI" id="CHEBI:43474"/>
        <dbReference type="ChEBI" id="CHEBI:58189"/>
    </reaction>
    <physiologicalReaction direction="left-to-right" evidence="9">
        <dbReference type="Rhea" id="RHEA:19670"/>
    </physiologicalReaction>
</comment>
<comment type="subunit">
    <text evidence="4 5">G proteins are composed of 3 units; alpha, beta and gamma. The alpha chain contains the guanine nucleotide binding site. Interacts through its N-terminal region with ALEX which is produced from the same locus in a different open reading frame. This interaction may inhibit its adenylyl cyclase-stimulating activity (By similarity). Interacts with MAGED2.</text>
</comment>
<comment type="subcellular location">
    <subcellularLocation>
        <location evidence="5">Cell membrane</location>
        <topology evidence="5">Peripheral membrane protein</topology>
    </subcellularLocation>
    <subcellularLocation>
        <location evidence="4">Apical cell membrane</location>
    </subcellularLocation>
</comment>
<comment type="alternative products">
    <event type="alternative splicing"/>
    <isoform>
        <id>Q6R0H7-1</id>
        <name>XLas-1</name>
        <name evidence="10">XXL</name>
        <sequence type="displayed"/>
    </isoform>
    <isoform>
        <id>Q6R0H7-2</id>
        <name>XLas-2</name>
        <name evidence="10">XXLb1</name>
        <sequence type="described" ref="VSP_052176 VSP_052180"/>
    </isoform>
    <isoform>
        <id>Q6R0H7-3</id>
        <name>XLas-3</name>
        <name evidence="10">XXLb2</name>
        <sequence type="described" ref="VSP_052177 VSP_052179"/>
    </isoform>
    <isoform>
        <id>Q6R0H7-4</id>
        <name>XLas-4</name>
        <sequence type="described" ref="VSP_052178"/>
    </isoform>
    <isoform>
        <id>P63094-1</id>
        <name evidence="13">Gnas-1</name>
        <sequence type="external"/>
    </isoform>
    <isoform>
        <id>P63094-2</id>
        <name evidence="13">Gnas-2</name>
        <sequence type="external"/>
    </isoform>
    <isoform>
        <id>P63094-3</id>
        <name evidence="13">Gnas-3</name>
        <name evidence="13">NTas</name>
        <sequence type="external"/>
    </isoform>
    <isoform>
        <id>Q9Z0F1-1</id>
        <name evidence="13">Nesp55-1</name>
        <sequence type="external"/>
    </isoform>
    <isoform>
        <id>Q9Z0F1-2</id>
        <name evidence="13">Nesp55-2</name>
        <sequence type="external"/>
    </isoform>
</comment>
<comment type="disruption phenotype">
    <text evidence="9">Mice cells lacking XLas isoforms which are then transfected with these isoforms and a range of receptors demonstrate that the XLas isoforms are capable of functionally coupling to the same receptors as the Gnas isoforms including Adrb2, Crfr1, Pthr1 and Tshr.</text>
</comment>
<comment type="miscellaneous">
    <text evidence="5">This protein is produced by a bicistronic gene which also produces the ALEX protein from an overlapping reading frame.</text>
</comment>
<comment type="miscellaneous">
    <text>The GNAS locus is imprinted in a complex manner, giving rise to distinct paternally, maternally and biallelically expressed proteins. The XLas isoforms are paternally derived, the Gnas isoforms are biallelically derived and the Nesp55 isoforms are maternally derived.</text>
</comment>
<comment type="similarity">
    <text evidence="6">Belongs to the G-alpha family. G(s) subfamily.</text>
</comment>
<comment type="sequence caution" evidence="13">
    <conflict type="erroneous initiation">
        <sequence resource="EMBL-CDS" id="AAD14686"/>
    </conflict>
</comment>
<comment type="sequence caution" evidence="13">
    <conflict type="erroneous initiation">
        <sequence resource="EMBL-CDS" id="CAB83219"/>
    </conflict>
</comment>
<sequence>MGMFNCLHGNNMSGQHDIPPEVGEQPEQEPLEAPGAAAPGAGAGPAEEMATEPDSEPSNNEPVPDETGSEISGPPEDSKSDIQSPCQAFEEVRVGGDYSPPPEEAMPFETQQPSLGDFWPTLEQPGPSGTPSGLQAFNPAILEPGTPTGASPGLGAYTPPPEEAMPFEFNEPAQGDHSQPPLQVPDLAPGGPEALVPRALPAEPGNIRFENAGFREDYSPPPEESVPFQVGGEEFGGDSPPPGLPRVIPQIGIGGEFPTVAVPSALCLAPAENAPPLWVRGAIDRPFREAVRSPPNFACDSPPMEITRPLLEIGRASIGVDDDTAVNMDSPPIASDGPPIEVSGAPDKSECAERPPVEREAAEMEGSPTTATAVEGKVPSPERGDGSSTQPEAMDAKPAPAAQAVSTGSDAGAPTDSAMLTDSQSDAGEDGTAPGTPSDLQSDPEELEEAPAVRADPDGGAAPVAPATPAESESEGSRDPAAEPASEAVPATTAESASGAAPVTQVEPAAAAVSATLAEPAARAAPITPKEPTTRAVPSARAHPAAGAVPGAPAMSASARAAAARAAYAGPLVWGARSLSATPAARASLPARAAAAARAASAARAVAAGRSASAAPSRAHLRPPSPEIQVADPPTPRPPPRPTAWPDKYERGRSCCRYEASSGICEIESSSDESEEGATGCFQWLLRRNRRPGLPRSHTVGSNPVRNFFTRAFGSCFGLSECTRSRSLSPGKAKDPMEERRKQMRKEAIEMREQKRADKKRSKLIDKQLEEEKMDYMCTHRLLLLGAGESGKSTIVKQMRILHVNGFNGEGGEEDPQAARSNSDGEKATKVQDIKNNLKEAIETIVAAMSNLVPPVELANPENQFRVDYILSVMNVPNFDFPPEFYEHAKALWEDEGVRACYERSNEYQLIDCAQYFLDKIDVIKQADYVPSDQDLLRCRVLTSGIFETKFQVDKVNFHMFDVGGQRDERRKWIQCFNDVTAIIFVVASSSYNMVIREDNQTNRLQEALNLFKSIWNNRWLRTISVILFLNKQDLLAEKVLAGKSKIEDYFPEFARYTTPEDATPEPGEDPRVTRAKYFIRDEFLRISTASGDGRHYCYPHFTCAVDTENIRRVFNDCRDIIQRMHLRQYELL</sequence>
<dbReference type="EC" id="3.6.5.-" evidence="9"/>
<dbReference type="EMBL" id="AY518305">
    <property type="protein sequence ID" value="AAR99380.1"/>
    <property type="molecule type" value="Genomic_DNA"/>
</dbReference>
<dbReference type="EMBL" id="AY518306">
    <property type="protein sequence ID" value="AAR99381.1"/>
    <property type="molecule type" value="Genomic_DNA"/>
</dbReference>
<dbReference type="EMBL" id="AY518307">
    <property type="protein sequence ID" value="AAR99382.1"/>
    <property type="molecule type" value="Genomic_DNA"/>
</dbReference>
<dbReference type="EMBL" id="AY518308">
    <property type="protein sequence ID" value="AAR99383.1"/>
    <property type="molecule type" value="Genomic_DNA"/>
</dbReference>
<dbReference type="EMBL" id="AY519501">
    <property type="protein sequence ID" value="AAS00601.1"/>
    <property type="molecule type" value="mRNA"/>
</dbReference>
<dbReference type="EMBL" id="AY519503">
    <property type="protein sequence ID" value="AAS00603.1"/>
    <property type="molecule type" value="mRNA"/>
</dbReference>
<dbReference type="EMBL" id="AY519504">
    <property type="protein sequence ID" value="AAS00604.1"/>
    <property type="molecule type" value="mRNA"/>
</dbReference>
<dbReference type="EMBL" id="AL593857">
    <property type="status" value="NOT_ANNOTATED_CDS"/>
    <property type="molecule type" value="Genomic_DNA"/>
</dbReference>
<dbReference type="EMBL" id="AJ251761">
    <property type="protein sequence ID" value="CAB83219.1"/>
    <property type="status" value="ALT_INIT"/>
    <property type="molecule type" value="Genomic_DNA"/>
</dbReference>
<dbReference type="EMBL" id="AF116268">
    <property type="protein sequence ID" value="AAD14686.1"/>
    <property type="status" value="ALT_INIT"/>
    <property type="molecule type" value="mRNA"/>
</dbReference>
<dbReference type="CCDS" id="CCDS17151.1">
    <molecule id="Q6R0H7-1"/>
</dbReference>
<dbReference type="CCDS" id="CCDS38354.1">
    <molecule id="Q6R0H7-4"/>
</dbReference>
<dbReference type="CCDS" id="CCDS38355.1">
    <molecule id="Q6R0H7-2"/>
</dbReference>
<dbReference type="CCDS" id="CCDS89590.1">
    <molecule id="Q6R0H7-3"/>
</dbReference>
<dbReference type="RefSeq" id="NP_001070975.1">
    <molecule id="Q6R0H7-4"/>
    <property type="nucleotide sequence ID" value="NM_001077507.2"/>
</dbReference>
<dbReference type="RefSeq" id="NP_001297014.1">
    <molecule id="Q6R0H7-3"/>
    <property type="nucleotide sequence ID" value="NM_001310085.1"/>
</dbReference>
<dbReference type="RefSeq" id="NP_034439.2">
    <molecule id="Q6R0H7-1"/>
    <property type="nucleotide sequence ID" value="NM_010309.4"/>
</dbReference>
<dbReference type="RefSeq" id="NP_963911.1">
    <molecule id="Q6R0H7-2"/>
    <property type="nucleotide sequence ID" value="NM_201617.2"/>
</dbReference>
<dbReference type="SMR" id="Q6R0H7"/>
<dbReference type="BioGRID" id="199972">
    <property type="interactions" value="38"/>
</dbReference>
<dbReference type="FunCoup" id="Q6R0H7">
    <property type="interactions" value="924"/>
</dbReference>
<dbReference type="IntAct" id="Q6R0H7">
    <property type="interactions" value="2"/>
</dbReference>
<dbReference type="STRING" id="10090.ENSMUSP00000140174"/>
<dbReference type="GlyGen" id="Q6R0H7">
    <property type="glycosylation" value="6 sites, 1 O-linked glycan (1 site)"/>
</dbReference>
<dbReference type="iPTMnet" id="Q6R0H7"/>
<dbReference type="SwissPalm" id="Q6R0H7"/>
<dbReference type="jPOST" id="Q6R0H7"/>
<dbReference type="PaxDb" id="10090-ENSMUSP00000079341"/>
<dbReference type="PeptideAtlas" id="Q6R0H7"/>
<dbReference type="ProteomicsDB" id="271024">
    <molecule id="Q6R0H7-1"/>
</dbReference>
<dbReference type="ProteomicsDB" id="271025">
    <molecule id="Q6R0H7-2"/>
</dbReference>
<dbReference type="ProteomicsDB" id="271026">
    <molecule id="Q6R0H7-3"/>
</dbReference>
<dbReference type="ProteomicsDB" id="271027">
    <molecule id="Q6R0H7-4"/>
</dbReference>
<dbReference type="Pumba" id="Q6R0H7"/>
<dbReference type="ABCD" id="Q6R0H7">
    <property type="antibodies" value="1 sequenced antibody"/>
</dbReference>
<dbReference type="Antibodypedia" id="4152">
    <property type="antibodies" value="800 antibodies from 43 providers"/>
</dbReference>
<dbReference type="DNASU" id="14683"/>
<dbReference type="Ensembl" id="ENSMUST00000080493.12">
    <molecule id="Q6R0H7-1"/>
    <property type="protein sequence ID" value="ENSMUSP00000079341.6"/>
    <property type="gene ID" value="ENSMUSG00000027523.21"/>
</dbReference>
<dbReference type="Ensembl" id="ENSMUST00000087876.11">
    <molecule id="Q6R0H7-4"/>
    <property type="protein sequence ID" value="ENSMUSP00000085184.5"/>
    <property type="gene ID" value="ENSMUSG00000027523.21"/>
</dbReference>
<dbReference type="Ensembl" id="ENSMUST00000087877.11">
    <molecule id="Q6R0H7-2"/>
    <property type="protein sequence ID" value="ENSMUSP00000085185.5"/>
    <property type="gene ID" value="ENSMUSG00000027523.21"/>
</dbReference>
<dbReference type="Ensembl" id="ENSMUST00000154658.8">
    <molecule id="Q6R0H7-3"/>
    <property type="protein sequence ID" value="ENSMUSP00000158758.2"/>
    <property type="gene ID" value="ENSMUSG00000027523.21"/>
</dbReference>
<dbReference type="Ensembl" id="ENSMUST00000185956.7">
    <molecule id="Q6R0H7-1"/>
    <property type="protein sequence ID" value="ENSMUSP00000140174.2"/>
    <property type="gene ID" value="ENSMUSG00000027523.21"/>
</dbReference>
<dbReference type="GeneID" id="14683"/>
<dbReference type="UCSC" id="uc008oet.1">
    <molecule id="Q6R0H7-2"/>
    <property type="organism name" value="mouse"/>
</dbReference>
<dbReference type="UCSC" id="uc033hrq.1">
    <molecule id="Q6R0H7-4"/>
    <property type="organism name" value="mouse"/>
</dbReference>
<dbReference type="AGR" id="MGI:95777"/>
<dbReference type="CTD" id="2778"/>
<dbReference type="MGI" id="MGI:95777">
    <property type="gene designation" value="Gnas"/>
</dbReference>
<dbReference type="VEuPathDB" id="HostDB:ENSMUSG00000027523"/>
<dbReference type="eggNOG" id="KOG0099">
    <property type="taxonomic scope" value="Eukaryota"/>
</dbReference>
<dbReference type="GeneTree" id="ENSGT00940000156300"/>
<dbReference type="HOGENOM" id="CLU_010619_0_0_1"/>
<dbReference type="InParanoid" id="Q6R0H7"/>
<dbReference type="OrthoDB" id="9836061at2759"/>
<dbReference type="PhylomeDB" id="Q6R0H7"/>
<dbReference type="TreeFam" id="TF300673"/>
<dbReference type="Reactome" id="R-MMU-381676">
    <property type="pathway name" value="Glucagon-like Peptide-1 (GLP1) regulates insulin secretion"/>
</dbReference>
<dbReference type="Reactome" id="R-MMU-392851">
    <property type="pathway name" value="Prostacyclin signalling through prostacyclin receptor"/>
</dbReference>
<dbReference type="Reactome" id="R-MMU-418555">
    <property type="pathway name" value="G alpha (s) signalling events"/>
</dbReference>
<dbReference type="Reactome" id="R-MMU-420092">
    <property type="pathway name" value="Glucagon-type ligand receptors"/>
</dbReference>
<dbReference type="Reactome" id="R-MMU-432040">
    <property type="pathway name" value="Vasopressin regulates renal water homeostasis via Aquaporins"/>
</dbReference>
<dbReference type="Reactome" id="R-MMU-9634597">
    <property type="pathway name" value="GPER1 signaling"/>
</dbReference>
<dbReference type="Reactome" id="R-MMU-9856530">
    <property type="pathway name" value="High laminar flow shear stress activates signaling by PIEZO1 and PECAM1:CDH5:KDR in endothelial cells"/>
</dbReference>
<dbReference type="BioGRID-ORCS" id="14683">
    <property type="hits" value="12 hits in 78 CRISPR screens"/>
</dbReference>
<dbReference type="CD-CODE" id="CE726F99">
    <property type="entry name" value="Postsynaptic density"/>
</dbReference>
<dbReference type="ChiTaRS" id="Gnas">
    <property type="organism name" value="mouse"/>
</dbReference>
<dbReference type="Proteomes" id="UP000000589">
    <property type="component" value="Chromosome 2"/>
</dbReference>
<dbReference type="RNAct" id="Q6R0H7">
    <property type="molecule type" value="protein"/>
</dbReference>
<dbReference type="Bgee" id="ENSMUSG00000027523">
    <property type="expression patterns" value="Expressed in superior cervical ganglion and 273 other cell types or tissues"/>
</dbReference>
<dbReference type="ExpressionAtlas" id="Q6R0H7">
    <property type="expression patterns" value="baseline and differential"/>
</dbReference>
<dbReference type="GO" id="GO:0016324">
    <property type="term" value="C:apical plasma membrane"/>
    <property type="evidence" value="ECO:0007669"/>
    <property type="project" value="UniProtKB-SubCell"/>
</dbReference>
<dbReference type="GO" id="GO:0030425">
    <property type="term" value="C:dendrite"/>
    <property type="evidence" value="ECO:0000314"/>
    <property type="project" value="MGI"/>
</dbReference>
<dbReference type="GO" id="GO:0005834">
    <property type="term" value="C:heterotrimeric G-protein complex"/>
    <property type="evidence" value="ECO:0000266"/>
    <property type="project" value="MGI"/>
</dbReference>
<dbReference type="GO" id="GO:0016020">
    <property type="term" value="C:membrane"/>
    <property type="evidence" value="ECO:0000314"/>
    <property type="project" value="MGI"/>
</dbReference>
<dbReference type="GO" id="GO:0005886">
    <property type="term" value="C:plasma membrane"/>
    <property type="evidence" value="ECO:0000314"/>
    <property type="project" value="MGI"/>
</dbReference>
<dbReference type="GO" id="GO:0010856">
    <property type="term" value="F:adenylate cyclase activator activity"/>
    <property type="evidence" value="ECO:0000314"/>
    <property type="project" value="MGI"/>
</dbReference>
<dbReference type="GO" id="GO:0010854">
    <property type="term" value="F:adenylate cyclase regulator activity"/>
    <property type="evidence" value="ECO:0000315"/>
    <property type="project" value="MGI"/>
</dbReference>
<dbReference type="GO" id="GO:0047391">
    <property type="term" value="F:alkylglycerophosphoethanolamine phosphodiesterase activity"/>
    <property type="evidence" value="ECO:0000266"/>
    <property type="project" value="MGI"/>
</dbReference>
<dbReference type="GO" id="GO:0003925">
    <property type="term" value="F:G protein activity"/>
    <property type="evidence" value="ECO:0000315"/>
    <property type="project" value="MGI"/>
</dbReference>
<dbReference type="GO" id="GO:0031683">
    <property type="term" value="F:G-protein beta/gamma-subunit complex binding"/>
    <property type="evidence" value="ECO:0007669"/>
    <property type="project" value="InterPro"/>
</dbReference>
<dbReference type="GO" id="GO:0005525">
    <property type="term" value="F:GTP binding"/>
    <property type="evidence" value="ECO:0007669"/>
    <property type="project" value="UniProtKB-KW"/>
</dbReference>
<dbReference type="GO" id="GO:0003924">
    <property type="term" value="F:GTPase activity"/>
    <property type="evidence" value="ECO:0000266"/>
    <property type="project" value="MGI"/>
</dbReference>
<dbReference type="GO" id="GO:0046872">
    <property type="term" value="F:metal ion binding"/>
    <property type="evidence" value="ECO:0007669"/>
    <property type="project" value="UniProtKB-KW"/>
</dbReference>
<dbReference type="GO" id="GO:0007191">
    <property type="term" value="P:adenylate cyclase-activating dopamine receptor signaling pathway"/>
    <property type="evidence" value="ECO:0000316"/>
    <property type="project" value="MGI"/>
</dbReference>
<dbReference type="GO" id="GO:0007189">
    <property type="term" value="P:adenylate cyclase-activating G protein-coupled receptor signaling pathway"/>
    <property type="evidence" value="ECO:0000314"/>
    <property type="project" value="MGI"/>
</dbReference>
<dbReference type="GO" id="GO:0051216">
    <property type="term" value="P:cartilage development"/>
    <property type="evidence" value="ECO:0000315"/>
    <property type="project" value="MGI"/>
</dbReference>
<dbReference type="GO" id="GO:0071377">
    <property type="term" value="P:cellular response to glucagon stimulus"/>
    <property type="evidence" value="ECO:0000315"/>
    <property type="project" value="MGI"/>
</dbReference>
<dbReference type="GO" id="GO:0048701">
    <property type="term" value="P:embryonic cranial skeleton morphogenesis"/>
    <property type="evidence" value="ECO:0000315"/>
    <property type="project" value="MGI"/>
</dbReference>
<dbReference type="GO" id="GO:0035116">
    <property type="term" value="P:embryonic hindlimb morphogenesis"/>
    <property type="evidence" value="ECO:0000315"/>
    <property type="project" value="MGI"/>
</dbReference>
<dbReference type="GO" id="GO:0001958">
    <property type="term" value="P:endochondral ossification"/>
    <property type="evidence" value="ECO:0000315"/>
    <property type="project" value="MGI"/>
</dbReference>
<dbReference type="GO" id="GO:0006112">
    <property type="term" value="P:energy reserve metabolic process"/>
    <property type="evidence" value="ECO:0000315"/>
    <property type="project" value="MGI"/>
</dbReference>
<dbReference type="GO" id="GO:0007186">
    <property type="term" value="P:G protein-coupled receptor signaling pathway"/>
    <property type="evidence" value="ECO:0000304"/>
    <property type="project" value="MGI"/>
</dbReference>
<dbReference type="GO" id="GO:0071514">
    <property type="term" value="P:genomic imprinting"/>
    <property type="evidence" value="ECO:0000315"/>
    <property type="project" value="MGI"/>
</dbReference>
<dbReference type="GO" id="GO:0035264">
    <property type="term" value="P:multicellular organism growth"/>
    <property type="evidence" value="ECO:0000315"/>
    <property type="project" value="MGI"/>
</dbReference>
<dbReference type="GO" id="GO:0120162">
    <property type="term" value="P:positive regulation of cold-induced thermogenesis"/>
    <property type="evidence" value="ECO:0000315"/>
    <property type="project" value="YuBioLab"/>
</dbReference>
<dbReference type="GO" id="GO:0032024">
    <property type="term" value="P:positive regulation of insulin secretion"/>
    <property type="evidence" value="ECO:0000314"/>
    <property type="project" value="MGI"/>
</dbReference>
<dbReference type="GO" id="GO:0045669">
    <property type="term" value="P:positive regulation of osteoblast differentiation"/>
    <property type="evidence" value="ECO:0000315"/>
    <property type="project" value="MGI"/>
</dbReference>
<dbReference type="GO" id="GO:0045672">
    <property type="term" value="P:positive regulation of osteoclast differentiation"/>
    <property type="evidence" value="ECO:0000315"/>
    <property type="project" value="MGI"/>
</dbReference>
<dbReference type="GO" id="GO:0040032">
    <property type="term" value="P:post-embryonic body morphogenesis"/>
    <property type="evidence" value="ECO:0000315"/>
    <property type="project" value="MGI"/>
</dbReference>
<dbReference type="GO" id="GO:0009791">
    <property type="term" value="P:post-embryonic development"/>
    <property type="evidence" value="ECO:0000315"/>
    <property type="project" value="MGI"/>
</dbReference>
<dbReference type="GO" id="GO:2000828">
    <property type="term" value="P:regulation of parathyroid hormone secretion"/>
    <property type="evidence" value="ECO:0000315"/>
    <property type="project" value="MGI"/>
</dbReference>
<dbReference type="GO" id="GO:0009410">
    <property type="term" value="P:response to xenobiotic stimulus"/>
    <property type="evidence" value="ECO:0000315"/>
    <property type="project" value="MGI"/>
</dbReference>
<dbReference type="GO" id="GO:0001501">
    <property type="term" value="P:skeletal system development"/>
    <property type="evidence" value="ECO:0000315"/>
    <property type="project" value="MGI"/>
</dbReference>
<dbReference type="GO" id="GO:0043588">
    <property type="term" value="P:skin development"/>
    <property type="evidence" value="ECO:0000315"/>
    <property type="project" value="MGI"/>
</dbReference>
<dbReference type="GO" id="GO:0001894">
    <property type="term" value="P:tissue homeostasis"/>
    <property type="evidence" value="ECO:0000315"/>
    <property type="project" value="MGI"/>
</dbReference>
<dbReference type="CDD" id="cd00066">
    <property type="entry name" value="G-alpha"/>
    <property type="match status" value="1"/>
</dbReference>
<dbReference type="CDD" id="cd22249">
    <property type="entry name" value="UDM1_RNF168_RNF169-like"/>
    <property type="match status" value="1"/>
</dbReference>
<dbReference type="FunFam" id="1.10.400.10:FF:000003">
    <property type="entry name" value="Guanine nucleotide-binding protein G(S) subunit alpha"/>
    <property type="match status" value="1"/>
</dbReference>
<dbReference type="FunFam" id="3.40.50.300:FF:006178">
    <property type="entry name" value="Guanine nucleotide-binding protein G(s) subunit alpha isoforms short"/>
    <property type="match status" value="2"/>
</dbReference>
<dbReference type="Gene3D" id="1.10.400.10">
    <property type="entry name" value="GI Alpha 1, domain 2-like"/>
    <property type="match status" value="1"/>
</dbReference>
<dbReference type="Gene3D" id="3.40.50.300">
    <property type="entry name" value="P-loop containing nucleotide triphosphate hydrolases"/>
    <property type="match status" value="1"/>
</dbReference>
<dbReference type="InterPro" id="IPR000367">
    <property type="entry name" value="Gprotein_alpha_S"/>
</dbReference>
<dbReference type="InterPro" id="IPR001019">
    <property type="entry name" value="Gprotein_alpha_su"/>
</dbReference>
<dbReference type="InterPro" id="IPR011025">
    <property type="entry name" value="GproteinA_insert"/>
</dbReference>
<dbReference type="InterPro" id="IPR027417">
    <property type="entry name" value="P-loop_NTPase"/>
</dbReference>
<dbReference type="PANTHER" id="PTHR10218">
    <property type="entry name" value="GTP-BINDING PROTEIN ALPHA SUBUNIT"/>
    <property type="match status" value="1"/>
</dbReference>
<dbReference type="PANTHER" id="PTHR10218:SF348">
    <property type="entry name" value="GUANINE NUCLEOTIDE-BINDING PROTEIN G(S) SUBUNIT ALPHA ISOFORMS XLAS"/>
    <property type="match status" value="1"/>
</dbReference>
<dbReference type="Pfam" id="PF00503">
    <property type="entry name" value="G-alpha"/>
    <property type="match status" value="1"/>
</dbReference>
<dbReference type="PRINTS" id="PR00318">
    <property type="entry name" value="GPROTEINA"/>
</dbReference>
<dbReference type="PRINTS" id="PR00443">
    <property type="entry name" value="GPROTEINAS"/>
</dbReference>
<dbReference type="SMART" id="SM00275">
    <property type="entry name" value="G_alpha"/>
    <property type="match status" value="1"/>
</dbReference>
<dbReference type="SUPFAM" id="SSF52540">
    <property type="entry name" value="P-loop containing nucleoside triphosphate hydrolases"/>
    <property type="match status" value="1"/>
</dbReference>
<dbReference type="SUPFAM" id="SSF47895">
    <property type="entry name" value="Transducin (alpha subunit), insertion domain"/>
    <property type="match status" value="1"/>
</dbReference>
<dbReference type="PROSITE" id="PS51882">
    <property type="entry name" value="G_ALPHA"/>
    <property type="match status" value="1"/>
</dbReference>
<feature type="chain" id="PRO_0000253985" description="Guanine nucleotide-binding protein G(s) subunit alpha isoforms XLas">
    <location>
        <begin position="1"/>
        <end position="1133"/>
    </location>
</feature>
<feature type="domain" description="G-alpha" evidence="7">
    <location>
        <begin position="778"/>
        <end position="1133"/>
    </location>
</feature>
<feature type="region of interest" description="Disordered" evidence="8">
    <location>
        <begin position="1"/>
        <end position="195"/>
    </location>
</feature>
<feature type="region of interest" description="Disordered" evidence="8">
    <location>
        <begin position="322"/>
        <end position="552"/>
    </location>
</feature>
<feature type="region of interest" description="Disordered" evidence="8">
    <location>
        <begin position="611"/>
        <end position="648"/>
    </location>
</feature>
<feature type="region of interest" description="Disordered" evidence="8">
    <location>
        <begin position="724"/>
        <end position="744"/>
    </location>
</feature>
<feature type="region of interest" description="G1 motif" evidence="7">
    <location>
        <begin position="781"/>
        <end position="794"/>
    </location>
</feature>
<feature type="region of interest" description="Disordered" evidence="8">
    <location>
        <begin position="807"/>
        <end position="828"/>
    </location>
</feature>
<feature type="region of interest" description="G2 motif" evidence="7">
    <location>
        <begin position="935"/>
        <end position="943"/>
    </location>
</feature>
<feature type="region of interest" description="G3 motif" evidence="7">
    <location>
        <begin position="958"/>
        <end position="967"/>
    </location>
</feature>
<feature type="region of interest" description="G4 motif" evidence="7">
    <location>
        <begin position="1027"/>
        <end position="1034"/>
    </location>
</feature>
<feature type="region of interest" description="G5 motif" evidence="7">
    <location>
        <begin position="1103"/>
        <end position="1108"/>
    </location>
</feature>
<feature type="coiled-coil region" evidence="6">
    <location>
        <begin position="737"/>
        <end position="761"/>
    </location>
</feature>
<feature type="compositionally biased region" description="Low complexity" evidence="8">
    <location>
        <begin position="31"/>
        <end position="48"/>
    </location>
</feature>
<feature type="compositionally biased region" description="Basic and acidic residues" evidence="8">
    <location>
        <begin position="347"/>
        <end position="362"/>
    </location>
</feature>
<feature type="compositionally biased region" description="Low complexity" evidence="8">
    <location>
        <begin position="391"/>
        <end position="404"/>
    </location>
</feature>
<feature type="compositionally biased region" description="Low complexity" evidence="8">
    <location>
        <begin position="459"/>
        <end position="471"/>
    </location>
</feature>
<feature type="compositionally biased region" description="Low complexity" evidence="8">
    <location>
        <begin position="482"/>
        <end position="498"/>
    </location>
</feature>
<feature type="compositionally biased region" description="Low complexity" evidence="8">
    <location>
        <begin position="515"/>
        <end position="525"/>
    </location>
</feature>
<feature type="compositionally biased region" description="Low complexity" evidence="8">
    <location>
        <begin position="535"/>
        <end position="552"/>
    </location>
</feature>
<feature type="compositionally biased region" description="Pro residues" evidence="8">
    <location>
        <begin position="633"/>
        <end position="643"/>
    </location>
</feature>
<feature type="compositionally biased region" description="Basic and acidic residues" evidence="8">
    <location>
        <begin position="732"/>
        <end position="744"/>
    </location>
</feature>
<feature type="binding site" evidence="2">
    <location>
        <begin position="786"/>
        <end position="794"/>
    </location>
    <ligand>
        <name>GTP</name>
        <dbReference type="ChEBI" id="CHEBI:37565"/>
    </ligand>
</feature>
<feature type="binding site" evidence="2">
    <location>
        <position position="793"/>
    </location>
    <ligand>
        <name>Mg(2+)</name>
        <dbReference type="ChEBI" id="CHEBI:18420"/>
    </ligand>
</feature>
<feature type="binding site" evidence="2">
    <location>
        <begin position="936"/>
        <end position="943"/>
    </location>
    <ligand>
        <name>GTP</name>
        <dbReference type="ChEBI" id="CHEBI:37565"/>
    </ligand>
</feature>
<feature type="binding site" evidence="2">
    <location>
        <position position="943"/>
    </location>
    <ligand>
        <name>Mg(2+)</name>
        <dbReference type="ChEBI" id="CHEBI:18420"/>
    </ligand>
</feature>
<feature type="binding site" evidence="3">
    <location>
        <begin position="962"/>
        <end position="966"/>
    </location>
    <ligand>
        <name>GTP</name>
        <dbReference type="ChEBI" id="CHEBI:37565"/>
    </ligand>
</feature>
<feature type="binding site" evidence="3">
    <location>
        <begin position="1031"/>
        <end position="1034"/>
    </location>
    <ligand>
        <name>GTP</name>
        <dbReference type="ChEBI" id="CHEBI:37565"/>
    </ligand>
</feature>
<feature type="binding site" evidence="2">
    <location>
        <position position="1105"/>
    </location>
    <ligand>
        <name>GTP</name>
        <dbReference type="ChEBI" id="CHEBI:37565"/>
    </ligand>
</feature>
<feature type="modified residue" description="ADP-ribosylarginine; by cholera toxin" evidence="1">
    <location>
        <position position="940"/>
    </location>
</feature>
<feature type="modified residue" description="Phosphoserine" evidence="4">
    <location>
        <position position="1091"/>
    </location>
</feature>
<feature type="splice variant" id="VSP_052176" description="In isoform XLas-2." evidence="12">
    <original>AGESGKSTIVKQMRILHVNGFNGEGGEEDPQAARSNSDGEKATKVQDIKNNLKEAIETIVAAMSNLVPPVELANPENQFRVDYILSVMNV</original>
    <variation>RKVVPSDTEGRYRPEASASASDRRLDRRGREVSPELLGWALRGSPGSIVRDRGGLGPSGCAPPPRLARLLRLRQLVVGVCWCPFSVFACA</variation>
    <location>
        <begin position="787"/>
        <end position="876"/>
    </location>
</feature>
<feature type="splice variant" id="VSP_052177" description="In isoform XLas-3." evidence="12">
    <original>AGESGKSTIVKQMRILHVNGFNGEGGEEDPQAARSNSDGEK</original>
    <variation>RKVVPSDTEGRYRPEASASASDRRLDRRGREVLESLAKAPL</variation>
    <location>
        <begin position="787"/>
        <end position="827"/>
    </location>
</feature>
<feature type="splice variant" id="VSP_052178" description="In isoform XLas-4." evidence="11">
    <original>EGGEEDPQAARSNSDG</original>
    <variation>DS</variation>
    <location>
        <begin position="810"/>
        <end position="825"/>
    </location>
</feature>
<feature type="splice variant" id="VSP_052179" description="In isoform XLas-3." evidence="12">
    <location>
        <begin position="828"/>
        <end position="1133"/>
    </location>
</feature>
<feature type="splice variant" id="VSP_052180" description="In isoform XLas-2." evidence="12">
    <location>
        <begin position="877"/>
        <end position="1133"/>
    </location>
</feature>
<feature type="sequence conflict" description="In Ref. 4; CAB83219." evidence="13" ref="4">
    <original>A</original>
    <variation>G</variation>
    <location>
        <position position="371"/>
    </location>
</feature>
<feature type="sequence conflict" description="In Ref. 4; CAB83219." evidence="13" ref="4">
    <original>P</original>
    <variation>S</variation>
    <location>
        <position position="381"/>
    </location>
</feature>
<feature type="sequence conflict" description="In Ref. 3." evidence="13" ref="3">
    <original>SLSATPAARASLPA</original>
    <variation>YSRYSQLLPPLGHPFLPR</variation>
    <location>
        <begin position="578"/>
        <end position="591"/>
    </location>
</feature>
<feature type="sequence conflict" description="In Ref. 3." evidence="13" ref="3">
    <location>
        <begin position="595"/>
        <end position="596"/>
    </location>
</feature>
<feature type="sequence conflict" description="In Ref. 3." evidence="13" ref="3">
    <original>A</original>
    <variation>Q</variation>
    <location>
        <position position="599"/>
    </location>
</feature>
<feature type="sequence conflict" description="In Ref. 3." evidence="13" ref="3">
    <original>SAAPS</original>
    <variation>LPPH</variation>
    <location>
        <begin position="613"/>
        <end position="617"/>
    </location>
</feature>
<feature type="sequence conflict" description="In Ref. 3." evidence="13" ref="3">
    <original>RPPSPEI</original>
    <variation>DPQPRD</variation>
    <location>
        <begin position="622"/>
        <end position="628"/>
    </location>
</feature>
<reference evidence="13 18" key="1">
    <citation type="journal article" date="2004" name="Proc. Natl. Acad. Sci. U.S.A.">
        <title>XL alpha-s, the extra-long form of the alpha subunit of the Gs G protein, is significantly longer than suspected, and so is its companion Alex.</title>
        <authorList>
            <person name="Abramowitz J."/>
            <person name="Grenet D."/>
            <person name="Birnbaumer M."/>
            <person name="Torres H.N."/>
            <person name="Birnbaumer L."/>
        </authorList>
    </citation>
    <scope>NUCLEOTIDE SEQUENCE [MRNA] (ISOFORMS XLAS-1; XLAS-2 AND XLAS-3)</scope>
    <scope>NUCLEOTIDE SEQUENCE [GENOMIC DNA] OF 935-1018 (ISOFORM XLAS-1)</scope>
    <source>
        <strain evidence="15">129/Sv</strain>
        <strain evidence="16">BALB/cJ</strain>
        <strain evidence="17">C57BL/6J</strain>
        <strain evidence="18">FVB/N</strain>
        <tissue evidence="18">Brain</tissue>
    </source>
</reference>
<reference key="2">
    <citation type="journal article" date="2009" name="PLoS Biol.">
        <title>Lineage-specific biology revealed by a finished genome assembly of the mouse.</title>
        <authorList>
            <person name="Church D.M."/>
            <person name="Goodstadt L."/>
            <person name="Hillier L.W."/>
            <person name="Zody M.C."/>
            <person name="Goldstein S."/>
            <person name="She X."/>
            <person name="Bult C.J."/>
            <person name="Agarwala R."/>
            <person name="Cherry J.L."/>
            <person name="DiCuccio M."/>
            <person name="Hlavina W."/>
            <person name="Kapustin Y."/>
            <person name="Meric P."/>
            <person name="Maglott D."/>
            <person name="Birtle Z."/>
            <person name="Marques A.C."/>
            <person name="Graves T."/>
            <person name="Zhou S."/>
            <person name="Teague B."/>
            <person name="Potamousis K."/>
            <person name="Churas C."/>
            <person name="Place M."/>
            <person name="Herschleb J."/>
            <person name="Runnheim R."/>
            <person name="Forrest D."/>
            <person name="Amos-Landgraf J."/>
            <person name="Schwartz D.C."/>
            <person name="Cheng Z."/>
            <person name="Lindblad-Toh K."/>
            <person name="Eichler E.E."/>
            <person name="Ponting C.P."/>
        </authorList>
    </citation>
    <scope>NUCLEOTIDE SEQUENCE [LARGE SCALE GENOMIC DNA]</scope>
    <source>
        <strain>C57BL/6J</strain>
    </source>
</reference>
<reference evidence="13 19" key="3">
    <citation type="journal article" date="2000" name="Hum. Mol. Genet.">
        <title>An imprinted antisense transcript at the human GNAS1 locus.</title>
        <authorList>
            <person name="Hayward B.E."/>
            <person name="Bonthron D.T."/>
        </authorList>
    </citation>
    <scope>NUCLEOTIDE SEQUENCE [GENOMIC DNA] OF 1-785</scope>
</reference>
<reference evidence="13 14" key="4">
    <citation type="journal article" date="2000" name="J. Biol. Chem.">
        <title>Characterization of the extra-large G protein alpha-subunit XLalphas. II. Signal transduction properties.</title>
        <authorList>
            <person name="Klemke M."/>
            <person name="Pasolli H.A."/>
            <person name="Kehlenbach R.H."/>
            <person name="Offermanns S."/>
            <person name="Schultz G."/>
            <person name="Huttner W.B."/>
        </authorList>
    </citation>
    <scope>NUCLEOTIDE SEQUENCE [MRNA] OF 357-1133 (ISOFORM XLAS-4)</scope>
    <source>
        <strain evidence="14">C57BL/6J</strain>
    </source>
</reference>
<reference evidence="13" key="5">
    <citation type="journal article" date="2002" name="Mol. Endocrinol.">
        <title>Receptor-mediated adenylyl cyclase activation through XLalpha(s), the extra-large variant of the stimulatory G protein alpha-subunit.</title>
        <authorList>
            <person name="Bastepe M."/>
            <person name="Gunes Y."/>
            <person name="Perez-Villamil B."/>
            <person name="Hunzelman J."/>
            <person name="Weinstein L.S."/>
            <person name="Jueppner H."/>
        </authorList>
    </citation>
    <scope>FUNCTION</scope>
    <scope>CATALYTIC ACTIVITY</scope>
    <scope>DISRUPTION PHENOTYPE</scope>
</reference>
<reference key="6">
    <citation type="journal article" date="2010" name="Cell">
        <title>A tissue-specific atlas of mouse protein phosphorylation and expression.</title>
        <authorList>
            <person name="Huttlin E.L."/>
            <person name="Jedrychowski M.P."/>
            <person name="Elias J.E."/>
            <person name="Goswami T."/>
            <person name="Rad R."/>
            <person name="Beausoleil S.A."/>
            <person name="Villen J."/>
            <person name="Haas W."/>
            <person name="Sowa M.E."/>
            <person name="Gygi S.P."/>
        </authorList>
    </citation>
    <scope>IDENTIFICATION BY MASS SPECTROMETRY [LARGE SCALE ANALYSIS]</scope>
    <source>
        <tissue>Brain</tissue>
        <tissue>Brown adipose tissue</tissue>
        <tissue>Heart</tissue>
        <tissue>Kidney</tissue>
        <tissue>Liver</tissue>
        <tissue>Lung</tissue>
        <tissue>Pancreas</tissue>
        <tissue>Spleen</tissue>
        <tissue>Testis</tissue>
    </source>
</reference>
<accession>Q6R0H7</accession>
<accession>A2A607</accession>
<accession>A2A608</accession>
<accession>Q6R0H4</accession>
<accession>Q6R0H5</accession>
<accession>Q6R2J5</accession>
<accession>Q9JJX0</accession>
<accession>Q9Z1N8</accession>
<name>GNAS1_MOUSE</name>
<keyword id="KW-0013">ADP-ribosylation</keyword>
<keyword id="KW-0025">Alternative splicing</keyword>
<keyword id="KW-1003">Cell membrane</keyword>
<keyword id="KW-0175">Coiled coil</keyword>
<keyword id="KW-0342">GTP-binding</keyword>
<keyword id="KW-0378">Hydrolase</keyword>
<keyword id="KW-0460">Magnesium</keyword>
<keyword id="KW-0472">Membrane</keyword>
<keyword id="KW-0479">Metal-binding</keyword>
<keyword id="KW-0547">Nucleotide-binding</keyword>
<keyword id="KW-0597">Phosphoprotein</keyword>
<keyword id="KW-1185">Reference proteome</keyword>
<keyword id="KW-0807">Transducer</keyword>
<proteinExistence type="evidence at protein level"/>